<protein>
    <recommendedName>
        <fullName evidence="16">Iron-sulfur cluster biogenesis chaperone, mitochondrial</fullName>
        <ecNumber evidence="9 11">3.6.4.10</ecNumber>
    </recommendedName>
    <alternativeName>
        <fullName evidence="16">Heat shock protein SSQ1, mitochondrial</fullName>
    </alternativeName>
    <alternativeName>
        <fullName evidence="16">Stress-seventy subfamily Q protein 1</fullName>
    </alternativeName>
    <alternativeName>
        <fullName evidence="16">mtHSP70 homolog</fullName>
    </alternativeName>
</protein>
<evidence type="ECO:0000269" key="1">
    <source>
    </source>
</evidence>
<evidence type="ECO:0000269" key="2">
    <source>
    </source>
</evidence>
<evidence type="ECO:0000269" key="3">
    <source>
    </source>
</evidence>
<evidence type="ECO:0000269" key="4">
    <source>
    </source>
</evidence>
<evidence type="ECO:0000269" key="5">
    <source>
    </source>
</evidence>
<evidence type="ECO:0000269" key="6">
    <source>
    </source>
</evidence>
<evidence type="ECO:0000269" key="7">
    <source>
    </source>
</evidence>
<evidence type="ECO:0000269" key="8">
    <source>
    </source>
</evidence>
<evidence type="ECO:0000269" key="9">
    <source>
    </source>
</evidence>
<evidence type="ECO:0000269" key="10">
    <source>
    </source>
</evidence>
<evidence type="ECO:0000269" key="11">
    <source>
    </source>
</evidence>
<evidence type="ECO:0000269" key="12">
    <source>
    </source>
</evidence>
<evidence type="ECO:0000269" key="13">
    <source>
    </source>
</evidence>
<evidence type="ECO:0000303" key="14">
    <source>
    </source>
</evidence>
<evidence type="ECO:0000303" key="15">
    <source>
    </source>
</evidence>
<evidence type="ECO:0000305" key="16"/>
<evidence type="ECO:0000312" key="17">
    <source>
        <dbReference type="SGD" id="S000004361"/>
    </source>
</evidence>
<gene>
    <name evidence="14 17" type="primary">SSQ1</name>
    <name evidence="15" type="synonym">SSC2</name>
    <name type="ordered locus">YLR369W</name>
</gene>
<keyword id="KW-0067">ATP-binding</keyword>
<keyword id="KW-0143">Chaperone</keyword>
<keyword id="KW-0378">Hydrolase</keyword>
<keyword id="KW-0496">Mitochondrion</keyword>
<keyword id="KW-0547">Nucleotide-binding</keyword>
<keyword id="KW-1185">Reference proteome</keyword>
<keyword id="KW-0346">Stress response</keyword>
<keyword id="KW-0809">Transit peptide</keyword>
<name>HSP7Q_YEAST</name>
<accession>Q05931</accession>
<accession>D6VZ06</accession>
<reference key="1">
    <citation type="journal article" date="1997" name="Nature">
        <title>The nucleotide sequence of Saccharomyces cerevisiae chromosome XII.</title>
        <authorList>
            <person name="Johnston M."/>
            <person name="Hillier L.W."/>
            <person name="Riles L."/>
            <person name="Albermann K."/>
            <person name="Andre B."/>
            <person name="Ansorge W."/>
            <person name="Benes V."/>
            <person name="Brueckner M."/>
            <person name="Delius H."/>
            <person name="Dubois E."/>
            <person name="Duesterhoeft A."/>
            <person name="Entian K.-D."/>
            <person name="Floeth M."/>
            <person name="Goffeau A."/>
            <person name="Hebling U."/>
            <person name="Heumann K."/>
            <person name="Heuss-Neitzel D."/>
            <person name="Hilbert H."/>
            <person name="Hilger F."/>
            <person name="Kleine K."/>
            <person name="Koetter P."/>
            <person name="Louis E.J."/>
            <person name="Messenguy F."/>
            <person name="Mewes H.-W."/>
            <person name="Miosga T."/>
            <person name="Moestl D."/>
            <person name="Mueller-Auer S."/>
            <person name="Nentwich U."/>
            <person name="Obermaier B."/>
            <person name="Piravandi E."/>
            <person name="Pohl T.M."/>
            <person name="Portetelle D."/>
            <person name="Purnelle B."/>
            <person name="Rechmann S."/>
            <person name="Rieger M."/>
            <person name="Rinke M."/>
            <person name="Rose M."/>
            <person name="Scharfe M."/>
            <person name="Scherens B."/>
            <person name="Scholler P."/>
            <person name="Schwager C."/>
            <person name="Schwarz S."/>
            <person name="Underwood A.P."/>
            <person name="Urrestarazu L.A."/>
            <person name="Vandenbol M."/>
            <person name="Verhasselt P."/>
            <person name="Vierendeels F."/>
            <person name="Voet M."/>
            <person name="Volckaert G."/>
            <person name="Voss H."/>
            <person name="Wambutt R."/>
            <person name="Wedler E."/>
            <person name="Wedler H."/>
            <person name="Zimmermann F.K."/>
            <person name="Zollner A."/>
            <person name="Hani J."/>
            <person name="Hoheisel J.D."/>
        </authorList>
    </citation>
    <scope>NUCLEOTIDE SEQUENCE [LARGE SCALE GENOMIC DNA]</scope>
    <source>
        <strain>ATCC 204508 / S288c</strain>
    </source>
</reference>
<reference key="2">
    <citation type="journal article" date="2014" name="G3 (Bethesda)">
        <title>The reference genome sequence of Saccharomyces cerevisiae: Then and now.</title>
        <authorList>
            <person name="Engel S.R."/>
            <person name="Dietrich F.S."/>
            <person name="Fisk D.G."/>
            <person name="Binkley G."/>
            <person name="Balakrishnan R."/>
            <person name="Costanzo M.C."/>
            <person name="Dwight S.S."/>
            <person name="Hitz B.C."/>
            <person name="Karra K."/>
            <person name="Nash R.S."/>
            <person name="Weng S."/>
            <person name="Wong E.D."/>
            <person name="Lloyd P."/>
            <person name="Skrzypek M.S."/>
            <person name="Miyasato S.R."/>
            <person name="Simison M."/>
            <person name="Cherry J.M."/>
        </authorList>
    </citation>
    <scope>GENOME REANNOTATION</scope>
    <source>
        <strain>ATCC 204508 / S288c</strain>
    </source>
</reference>
<reference key="3">
    <citation type="journal article" date="1998" name="J. Biol. Chem.">
        <title>Mt-Hsp70 homolog, Ssc2p, required for maturation of yeast frataxin and mitochondrial iron homeostasis.</title>
        <authorList>
            <person name="Knight S.A.B."/>
            <person name="Sepuri N.B.V."/>
            <person name="Pain D."/>
            <person name="Dancis A."/>
        </authorList>
    </citation>
    <scope>FUNCTION</scope>
</reference>
<reference key="4">
    <citation type="journal article" date="2000" name="Mol. Cell. Biol.">
        <title>Role of the mitochondrial Hsp70s, Ssc1 and Ssq1, in the maturation of Yfh1.</title>
        <authorList>
            <person name="Voisine C."/>
            <person name="Schilke B."/>
            <person name="Ohlson M."/>
            <person name="Beinert H."/>
            <person name="Marszalek J."/>
            <person name="Craig E.A."/>
        </authorList>
    </citation>
    <scope>FUNCTION</scope>
    <scope>SUBCELLULAR LOCATION</scope>
</reference>
<reference key="5">
    <citation type="journal article" date="2001" name="J. Mol. Biol.">
        <title>The mitochondrial proteins Ssq1 and Jac1 are required for the assembly of iron sulfur clusters in mitochondria.</title>
        <authorList>
            <person name="Lutz T."/>
            <person name="Westermann B."/>
            <person name="Neupert W."/>
            <person name="Herrmann J.M."/>
        </authorList>
    </citation>
    <scope>FUNCTION</scope>
    <scope>INTERACTION WITH MGE1</scope>
    <scope>SUBCELLULAR LOCATION</scope>
</reference>
<reference key="6">
    <citation type="journal article" date="2003" name="J. Biol. Chem.">
        <title>Ssq1, a mitochondrial Hsp70 involved in iron-sulfur (Fe/S) center biogenesis. Similarities to and differences from its bacterial counterpart.</title>
        <authorList>
            <person name="Dutkiewicz R."/>
            <person name="Schilke B."/>
            <person name="Knieszner H."/>
            <person name="Walter W."/>
            <person name="Craig E.A."/>
            <person name="Marszalek J."/>
        </authorList>
    </citation>
    <scope>FUNCTION</scope>
    <scope>INTERACTION WITH ISU1</scope>
</reference>
<reference key="7">
    <citation type="journal article" date="2003" name="Nature">
        <title>Global analysis of protein localization in budding yeast.</title>
        <authorList>
            <person name="Huh W.-K."/>
            <person name="Falvo J.V."/>
            <person name="Gerke L.C."/>
            <person name="Carroll A.S."/>
            <person name="Howson R.W."/>
            <person name="Weissman J.S."/>
            <person name="O'Shea E.K."/>
        </authorList>
    </citation>
    <scope>SUBCELLULAR LOCATION [LARGE SCALE ANALYSIS]</scope>
</reference>
<reference key="8">
    <citation type="journal article" date="2003" name="Nature">
        <title>Global analysis of protein expression in yeast.</title>
        <authorList>
            <person name="Ghaemmaghami S."/>
            <person name="Huh W.-K."/>
            <person name="Bower K."/>
            <person name="Howson R.W."/>
            <person name="Belle A."/>
            <person name="Dephoure N."/>
            <person name="O'Shea E.K."/>
            <person name="Weissman J.S."/>
        </authorList>
    </citation>
    <scope>LEVEL OF PROTEIN EXPRESSION [LARGE SCALE ANALYSIS]</scope>
</reference>
<reference key="9">
    <citation type="journal article" date="2003" name="Proc. Natl. Acad. Sci. U.S.A.">
        <title>The proteome of Saccharomyces cerevisiae mitochondria.</title>
        <authorList>
            <person name="Sickmann A."/>
            <person name="Reinders J."/>
            <person name="Wagner Y."/>
            <person name="Joppich C."/>
            <person name="Zahedi R.P."/>
            <person name="Meyer H.E."/>
            <person name="Schoenfisch B."/>
            <person name="Perschil I."/>
            <person name="Chacinska A."/>
            <person name="Guiard B."/>
            <person name="Rehling P."/>
            <person name="Pfanner N."/>
            <person name="Meisinger C."/>
        </authorList>
    </citation>
    <scope>SUBCELLULAR LOCATION [LARGE SCALE ANALYSIS]</scope>
    <source>
        <strain>ATCC 76625 / YPH499</strain>
    </source>
</reference>
<reference key="10">
    <citation type="journal article" date="2004" name="J. Biol. Chem.">
        <title>Sequence-specific interaction between mitochondrial Fe-S scaffold protein Isu and Hsp70 Ssq1 is essential for their in vivo function.</title>
        <authorList>
            <person name="Dutkiewicz R."/>
            <person name="Schilke B."/>
            <person name="Cheng S."/>
            <person name="Knieszner H."/>
            <person name="Craig E.A."/>
            <person name="Marszalek J."/>
        </authorList>
    </citation>
    <scope>FUNCTION</scope>
    <scope>INTERACTION WITH ISU1</scope>
</reference>
<reference key="11">
    <citation type="journal article" date="2005" name="J. Biol. Chem.">
        <title>Compensation for a defective interaction of the hsp70 ssq1 with the mitochondrial Fe-S cluster scaffold isu.</title>
        <authorList>
            <person name="Knieszner H."/>
            <person name="Schilke B."/>
            <person name="Dutkiewicz R."/>
            <person name="D'Silva P."/>
            <person name="Cheng S."/>
            <person name="Ohlson M."/>
            <person name="Craig E.A."/>
            <person name="Marszalek J."/>
        </authorList>
    </citation>
    <scope>FUNCTION</scope>
    <scope>MUTAGENESIS OF PHE-462 AND VAL-472</scope>
</reference>
<reference key="12">
    <citation type="journal article" date="2006" name="J. Biol. Chem.">
        <title>The Hsp70 chaperone Ssq1p is dispensable for iron-sulfur cluster formation on the scaffold protein Isu1p.</title>
        <authorList>
            <person name="Dutkiewicz R."/>
            <person name="Marszalek J."/>
            <person name="Schilke B."/>
            <person name="Craig E.A."/>
            <person name="Lill R."/>
            <person name="Muehlenhoff U."/>
        </authorList>
    </citation>
    <scope>FUNCTION</scope>
    <scope>CATALYTIC ACTIVITY</scope>
</reference>
<reference key="13">
    <citation type="journal article" date="2013" name="Mol. Biol. Cell">
        <title>The mitochondrial Hsp70 chaperone Ssq1 facilitates Fe/S cluster transfer from Isu1 to Grx5 by complex formation.</title>
        <authorList>
            <person name="Uzarska M.A."/>
            <person name="Dutkiewicz R."/>
            <person name="Freibert S.A."/>
            <person name="Lill R."/>
            <person name="Muehlenhoff U."/>
        </authorList>
    </citation>
    <scope>FUNCTION</scope>
    <scope>INTERACTION WITH GRX5</scope>
</reference>
<reference key="14">
    <citation type="journal article" date="2016" name="Mol. Biol. Evol.">
        <title>Iron-Sulfur Cluster Biogenesis Chaperones: Evidence for Emergence of Mutational Robustness of a Highly Specific Protein-Protein Interaction.</title>
        <authorList>
            <person name="Delewski W."/>
            <person name="Paterkiewicz B."/>
            <person name="Manicki M."/>
            <person name="Schilke B."/>
            <person name="Tomiczek B."/>
            <person name="Ciesielski S.J."/>
            <person name="Nierzwicki L."/>
            <person name="Czub J."/>
            <person name="Dutkiewicz R."/>
            <person name="Craig E.A."/>
            <person name="Marszalek J."/>
        </authorList>
    </citation>
    <scope>FUNCTION</scope>
    <scope>CATALYTIC ACTIVITY</scope>
    <scope>INTERACTION WITH JAC1</scope>
</reference>
<reference key="15">
    <citation type="journal article" date="2019" name="J. Biol. Chem.">
        <title>Mitochondria export iron-sulfur and sulfur intermediates to the cytoplasm for iron-sulfur cluster assembly and tRNA thiolation in yeast.</title>
        <authorList>
            <person name="Pandey A.K."/>
            <person name="Pain J."/>
            <person name="Dancis A."/>
            <person name="Pain D."/>
        </authorList>
    </citation>
    <scope>FUNCTION</scope>
    <scope>DISRUPTION PHENOTYPE</scope>
</reference>
<feature type="transit peptide" description="Mitochondrion">
    <location>
        <begin position="1"/>
        <end status="unknown"/>
    </location>
</feature>
<feature type="chain" id="PRO_0000270557" description="Iron-sulfur cluster biogenesis chaperone, mitochondrial">
    <location>
        <begin status="unknown"/>
        <end position="657"/>
    </location>
</feature>
<feature type="mutagenesis site" description="Decreases interaction with ISU1." evidence="8">
    <original>F</original>
    <variation>S</variation>
    <location>
        <position position="462"/>
    </location>
</feature>
<feature type="mutagenesis site" description="10-fold decrease in interaction with ISU1." evidence="8">
    <original>V</original>
    <variation>F</variation>
    <location>
        <position position="472"/>
    </location>
</feature>
<dbReference type="EC" id="3.6.4.10" evidence="9 11"/>
<dbReference type="EMBL" id="U19103">
    <property type="protein sequence ID" value="AAB67565.1"/>
    <property type="molecule type" value="Genomic_DNA"/>
</dbReference>
<dbReference type="EMBL" id="BK006945">
    <property type="protein sequence ID" value="DAA09672.1"/>
    <property type="molecule type" value="Genomic_DNA"/>
</dbReference>
<dbReference type="PIR" id="S51387">
    <property type="entry name" value="S51387"/>
</dbReference>
<dbReference type="RefSeq" id="NP_013473.1">
    <property type="nucleotide sequence ID" value="NM_001182258.1"/>
</dbReference>
<dbReference type="SMR" id="Q05931"/>
<dbReference type="BioGRID" id="31629">
    <property type="interactions" value="42"/>
</dbReference>
<dbReference type="DIP" id="DIP-6407N"/>
<dbReference type="FunCoup" id="Q05931">
    <property type="interactions" value="213"/>
</dbReference>
<dbReference type="IntAct" id="Q05931">
    <property type="interactions" value="13"/>
</dbReference>
<dbReference type="MINT" id="Q05931"/>
<dbReference type="STRING" id="4932.YLR369W"/>
<dbReference type="iPTMnet" id="Q05931"/>
<dbReference type="PaxDb" id="4932-YLR369W"/>
<dbReference type="PeptideAtlas" id="Q05931"/>
<dbReference type="EnsemblFungi" id="YLR369W_mRNA">
    <property type="protein sequence ID" value="YLR369W"/>
    <property type="gene ID" value="YLR369W"/>
</dbReference>
<dbReference type="GeneID" id="851084"/>
<dbReference type="KEGG" id="sce:YLR369W"/>
<dbReference type="AGR" id="SGD:S000004361"/>
<dbReference type="SGD" id="S000004361">
    <property type="gene designation" value="SSQ1"/>
</dbReference>
<dbReference type="VEuPathDB" id="FungiDB:YLR369W"/>
<dbReference type="eggNOG" id="KOG0102">
    <property type="taxonomic scope" value="Eukaryota"/>
</dbReference>
<dbReference type="HOGENOM" id="CLU_005965_2_1_1"/>
<dbReference type="InParanoid" id="Q05931"/>
<dbReference type="OMA" id="IFGKEPC"/>
<dbReference type="OrthoDB" id="2401965at2759"/>
<dbReference type="BioCyc" id="MetaCyc:G3O-32438-MONOMER"/>
<dbReference type="BioCyc" id="YEAST:G3O-32438-MONOMER"/>
<dbReference type="BioGRID-ORCS" id="851084">
    <property type="hits" value="0 hits in 10 CRISPR screens"/>
</dbReference>
<dbReference type="PRO" id="PR:Q05931"/>
<dbReference type="Proteomes" id="UP000002311">
    <property type="component" value="Chromosome XII"/>
</dbReference>
<dbReference type="RNAct" id="Q05931">
    <property type="molecule type" value="protein"/>
</dbReference>
<dbReference type="GO" id="GO:0005737">
    <property type="term" value="C:cytoplasm"/>
    <property type="evidence" value="ECO:0000318"/>
    <property type="project" value="GO_Central"/>
</dbReference>
<dbReference type="GO" id="GO:0005759">
    <property type="term" value="C:mitochondrial matrix"/>
    <property type="evidence" value="ECO:0000314"/>
    <property type="project" value="SGD"/>
</dbReference>
<dbReference type="GO" id="GO:0005739">
    <property type="term" value="C:mitochondrion"/>
    <property type="evidence" value="ECO:0000315"/>
    <property type="project" value="SGD"/>
</dbReference>
<dbReference type="GO" id="GO:0005524">
    <property type="term" value="F:ATP binding"/>
    <property type="evidence" value="ECO:0007669"/>
    <property type="project" value="UniProtKB-KW"/>
</dbReference>
<dbReference type="GO" id="GO:0016887">
    <property type="term" value="F:ATP hydrolysis activity"/>
    <property type="evidence" value="ECO:0000314"/>
    <property type="project" value="SGD"/>
</dbReference>
<dbReference type="GO" id="GO:0140662">
    <property type="term" value="F:ATP-dependent protein folding chaperone"/>
    <property type="evidence" value="ECO:0007669"/>
    <property type="project" value="InterPro"/>
</dbReference>
<dbReference type="GO" id="GO:0031072">
    <property type="term" value="F:heat shock protein binding"/>
    <property type="evidence" value="ECO:0000318"/>
    <property type="project" value="GO_Central"/>
</dbReference>
<dbReference type="GO" id="GO:0044183">
    <property type="term" value="F:protein folding chaperone"/>
    <property type="evidence" value="ECO:0000318"/>
    <property type="project" value="GO_Central"/>
</dbReference>
<dbReference type="GO" id="GO:0051082">
    <property type="term" value="F:unfolded protein binding"/>
    <property type="evidence" value="ECO:0000314"/>
    <property type="project" value="SGD"/>
</dbReference>
<dbReference type="GO" id="GO:0044571">
    <property type="term" value="P:[2Fe-2S] cluster assembly"/>
    <property type="evidence" value="ECO:0000315"/>
    <property type="project" value="SGD"/>
</dbReference>
<dbReference type="GO" id="GO:0051085">
    <property type="term" value="P:chaperone cofactor-dependent protein refolding"/>
    <property type="evidence" value="ECO:0000318"/>
    <property type="project" value="GO_Central"/>
</dbReference>
<dbReference type="GO" id="GO:0006879">
    <property type="term" value="P:intracellular iron ion homeostasis"/>
    <property type="evidence" value="ECO:0000315"/>
    <property type="project" value="SGD"/>
</dbReference>
<dbReference type="GO" id="GO:0016226">
    <property type="term" value="P:iron-sulfur cluster assembly"/>
    <property type="evidence" value="ECO:0000315"/>
    <property type="project" value="SGD"/>
</dbReference>
<dbReference type="GO" id="GO:0042026">
    <property type="term" value="P:protein refolding"/>
    <property type="evidence" value="ECO:0000318"/>
    <property type="project" value="GO_Central"/>
</dbReference>
<dbReference type="CDD" id="cd10234">
    <property type="entry name" value="ASKHA_NBD_HSP70_DnaK-like"/>
    <property type="match status" value="1"/>
</dbReference>
<dbReference type="FunFam" id="2.60.34.10:FF:000014">
    <property type="entry name" value="Chaperone protein DnaK HSP70"/>
    <property type="match status" value="1"/>
</dbReference>
<dbReference type="FunFam" id="3.30.420.40:FF:000020">
    <property type="entry name" value="Chaperone protein HscA homolog"/>
    <property type="match status" value="1"/>
</dbReference>
<dbReference type="FunFam" id="3.30.30.30:FF:000005">
    <property type="entry name" value="Heat shock protein ssb1"/>
    <property type="match status" value="1"/>
</dbReference>
<dbReference type="FunFam" id="3.30.420.40:FF:000004">
    <property type="entry name" value="Molecular chaperone DnaK"/>
    <property type="match status" value="1"/>
</dbReference>
<dbReference type="FunFam" id="3.90.640.10:FF:000074">
    <property type="entry name" value="Stress-seventy subfamily Q protein"/>
    <property type="match status" value="1"/>
</dbReference>
<dbReference type="Gene3D" id="3.30.420.40">
    <property type="match status" value="2"/>
</dbReference>
<dbReference type="Gene3D" id="3.90.640.10">
    <property type="entry name" value="Actin, Chain A, domain 4"/>
    <property type="match status" value="1"/>
</dbReference>
<dbReference type="Gene3D" id="2.60.34.10">
    <property type="entry name" value="Substrate Binding Domain Of DNAk, Chain A, domain 1"/>
    <property type="match status" value="1"/>
</dbReference>
<dbReference type="InterPro" id="IPR043129">
    <property type="entry name" value="ATPase_NBD"/>
</dbReference>
<dbReference type="InterPro" id="IPR018181">
    <property type="entry name" value="Heat_shock_70_CS"/>
</dbReference>
<dbReference type="InterPro" id="IPR029048">
    <property type="entry name" value="HSP70_C_sf"/>
</dbReference>
<dbReference type="InterPro" id="IPR029047">
    <property type="entry name" value="HSP70_peptide-bd_sf"/>
</dbReference>
<dbReference type="InterPro" id="IPR013126">
    <property type="entry name" value="Hsp_70_fam"/>
</dbReference>
<dbReference type="NCBIfam" id="NF001413">
    <property type="entry name" value="PRK00290.1"/>
    <property type="match status" value="1"/>
</dbReference>
<dbReference type="PANTHER" id="PTHR19375">
    <property type="entry name" value="HEAT SHOCK PROTEIN 70KDA"/>
    <property type="match status" value="1"/>
</dbReference>
<dbReference type="Pfam" id="PF00012">
    <property type="entry name" value="HSP70"/>
    <property type="match status" value="1"/>
</dbReference>
<dbReference type="PRINTS" id="PR00301">
    <property type="entry name" value="HEATSHOCK70"/>
</dbReference>
<dbReference type="SUPFAM" id="SSF53067">
    <property type="entry name" value="Actin-like ATPase domain"/>
    <property type="match status" value="2"/>
</dbReference>
<dbReference type="SUPFAM" id="SSF100934">
    <property type="entry name" value="Heat shock protein 70kD (HSP70), C-terminal subdomain"/>
    <property type="match status" value="1"/>
</dbReference>
<dbReference type="SUPFAM" id="SSF100920">
    <property type="entry name" value="Heat shock protein 70kD (HSP70), peptide-binding domain"/>
    <property type="match status" value="1"/>
</dbReference>
<dbReference type="PROSITE" id="PS00297">
    <property type="entry name" value="HSP70_1"/>
    <property type="match status" value="1"/>
</dbReference>
<dbReference type="PROSITE" id="PS00329">
    <property type="entry name" value="HSP70_2"/>
    <property type="match status" value="1"/>
</dbReference>
<dbReference type="PROSITE" id="PS01036">
    <property type="entry name" value="HSP70_3"/>
    <property type="match status" value="1"/>
</dbReference>
<sequence length="657" mass="72365">MLKSGRLNFLKLNINSRLLYSTNPQLTKKVIGIDLGTTNSAVAYIRDSNDKKSATIIENDEGQRTTPSIVAFDVKSSPQNKDQMKTLVGMAAKRQNAINSENTFFATKRLIGRAFNDKEVQRDMAVMPYKIVKCESNGQAYLSTSNGLIQSPSQIASILLKYLKQTSEEYLGEKVNLAVITVPAYFNDSQRQATKDAGKLAGLNVLRVINEPTAAALSFGIDDKRNNGLIAVYDLGGGTFDISILDIEDGVFEVRATNGDTHLGGEDFDNVIVNYIIDTFIHENPEITREEITKNRETMQRLKDVSERAKIDLSHVKKTFIELPFVYKSKHLRVPMTEEELDNMTLSLINRTIPPVKQALKDADIEPEDIDEVILVGGMTRMPKIRSVVKDLFGKSPNSSVNPDETVALGAAIQGGILSGEIKNVLLLDVTPLTLGIETFGGAFSPLIPRNTTVPVKKTEIFSTGVDGQAGVDIKVFQGERGLVRNNKLIGDLKLTGITPLPKGIPQIYVTFDIDADGIINVSAAEKSSGKQQSITVIPNSGLSEEEIAKLIEEANANRAQDNLIRQRLELISKADIMISDTENLFKRYEKLISSEKEYSNIVEDIKALRQAIKNFKANENDMSIDVNGIKKATDALQGRALKLFQSATKNQQNQGK</sequence>
<proteinExistence type="evidence at protein level"/>
<organism>
    <name type="scientific">Saccharomyces cerevisiae (strain ATCC 204508 / S288c)</name>
    <name type="common">Baker's yeast</name>
    <dbReference type="NCBI Taxonomy" id="559292"/>
    <lineage>
        <taxon>Eukaryota</taxon>
        <taxon>Fungi</taxon>
        <taxon>Dikarya</taxon>
        <taxon>Ascomycota</taxon>
        <taxon>Saccharomycotina</taxon>
        <taxon>Saccharomycetes</taxon>
        <taxon>Saccharomycetales</taxon>
        <taxon>Saccharomycetaceae</taxon>
        <taxon>Saccharomyces</taxon>
    </lineage>
</organism>
<comment type="function">
    <text evidence="1 2 3 7 8 9 10 11 12 13">Required for the assembly of iron-sulfur (Fe/S) clusters in mitochondria (PubMed:10779357, PubMed:11273703, PubMed:12756240, PubMed:15123690, PubMed:15958384, PubMed:16431909, PubMed:31040179, PubMed:9660806). Assisted by the DnaJ-like co-chaperone JAC1 and the nucleotide exchange factor MGE1, it mediates ATP-dependent Fe-S cluster transfer from the scaffold proteins ISU1/ISU2 to GRX5 (PubMed:11273703, PubMed:12756240, PubMed:15123690, PubMed:15958384, PubMed:16431909, PubMed:23615440, PubMed:26545917, PubMed:31040179).</text>
</comment>
<comment type="catalytic activity">
    <reaction evidence="9 11">
        <text>ATP + H2O = ADP + phosphate + H(+)</text>
        <dbReference type="Rhea" id="RHEA:13065"/>
        <dbReference type="ChEBI" id="CHEBI:15377"/>
        <dbReference type="ChEBI" id="CHEBI:15378"/>
        <dbReference type="ChEBI" id="CHEBI:30616"/>
        <dbReference type="ChEBI" id="CHEBI:43474"/>
        <dbReference type="ChEBI" id="CHEBI:456216"/>
        <dbReference type="EC" id="3.6.4.10"/>
    </reaction>
</comment>
<comment type="subunit">
    <text evidence="2 3 7 10 11">Interacts with the Fe/S cluster assembly proteins ISU1, MGE1, GRX5 and JAC1.</text>
</comment>
<comment type="interaction">
    <interactant intactId="EBI-35227">
        <id>Q05931</id>
    </interactant>
    <interactant intactId="EBI-29901">
        <id>Q03020</id>
        <label>ISU1</label>
    </interactant>
    <organismsDiffer>false</organismsDiffer>
    <experiments>5</experiments>
</comment>
<comment type="subcellular location">
    <subcellularLocation>
        <location evidence="1 2 4 6">Mitochondrion matrix</location>
    </subcellularLocation>
</comment>
<comment type="disruption phenotype">
    <text evidence="12">Disrupts iron-sulfur (Fe-S) cluster assembly (PubMed:31040179). Normal cytosolic tRNA thiolation (PubMed:31040179).</text>
</comment>
<comment type="miscellaneous">
    <text evidence="5">Present with 5550 molecules/cell in log phase SD medium.</text>
</comment>
<comment type="similarity">
    <text evidence="16">Belongs to the heat shock protein 70 family.</text>
</comment>